<name>NRDR_CORA7</name>
<gene>
    <name evidence="1" type="primary">nrdR</name>
    <name type="ordered locus">cauri_1475</name>
</gene>
<evidence type="ECO:0000255" key="1">
    <source>
        <dbReference type="HAMAP-Rule" id="MF_00440"/>
    </source>
</evidence>
<feature type="chain" id="PRO_1000191790" description="Transcriptional repressor NrdR">
    <location>
        <begin position="1"/>
        <end position="152"/>
    </location>
</feature>
<feature type="domain" description="ATP-cone" evidence="1">
    <location>
        <begin position="46"/>
        <end position="136"/>
    </location>
</feature>
<feature type="zinc finger region" evidence="1">
    <location>
        <begin position="3"/>
        <end position="34"/>
    </location>
</feature>
<comment type="function">
    <text evidence="1">Negatively regulates transcription of bacterial ribonucleotide reductase nrd genes and operons by binding to NrdR-boxes.</text>
</comment>
<comment type="cofactor">
    <cofactor evidence="1">
        <name>Zn(2+)</name>
        <dbReference type="ChEBI" id="CHEBI:29105"/>
    </cofactor>
    <text evidence="1">Binds 1 zinc ion.</text>
</comment>
<comment type="similarity">
    <text evidence="1">Belongs to the NrdR family.</text>
</comment>
<accession>C3PGW4</accession>
<keyword id="KW-0067">ATP-binding</keyword>
<keyword id="KW-0238">DNA-binding</keyword>
<keyword id="KW-0479">Metal-binding</keyword>
<keyword id="KW-0547">Nucleotide-binding</keyword>
<keyword id="KW-1185">Reference proteome</keyword>
<keyword id="KW-0678">Repressor</keyword>
<keyword id="KW-0804">Transcription</keyword>
<keyword id="KW-0805">Transcription regulation</keyword>
<keyword id="KW-0862">Zinc</keyword>
<keyword id="KW-0863">Zinc-finger</keyword>
<sequence>MYCPFCHNEQSRVIDSRVIDSGTSIRRRRECAACKGRFTTIEKAVLSVVKRNGLAEPFSRDKLIRGVKRACQGRDVSDDALKKLAQEVEETVRSHGSSQVNANDIGLAILEPLRDLDEVAYLRFASVYKSFESADDFESEIRLMRRRDRDSF</sequence>
<protein>
    <recommendedName>
        <fullName evidence="1">Transcriptional repressor NrdR</fullName>
    </recommendedName>
</protein>
<reference key="1">
    <citation type="journal article" date="2010" name="BMC Genomics">
        <title>Complete genome sequence and lifestyle of black-pigmented Corynebacterium aurimucosum ATCC 700975 (formerly C. nigricans CN-1) isolated from a vaginal swab of a woman with spontaneous abortion.</title>
        <authorList>
            <person name="Trost E."/>
            <person name="Gotker S."/>
            <person name="Schneider J."/>
            <person name="Schneiker-Bekel S."/>
            <person name="Szczepanowski R."/>
            <person name="Tilker A."/>
            <person name="Viehoever P."/>
            <person name="Arnold W."/>
            <person name="Bekel T."/>
            <person name="Blom J."/>
            <person name="Gartemann K.H."/>
            <person name="Linke B."/>
            <person name="Goesmann A."/>
            <person name="Puhler A."/>
            <person name="Shukla S.K."/>
            <person name="Tauch A."/>
        </authorList>
    </citation>
    <scope>NUCLEOTIDE SEQUENCE [LARGE SCALE GENOMIC DNA]</scope>
    <source>
        <strain>ATCC 700975 / DSM 44827 / CIP 107346 / CN-1</strain>
    </source>
</reference>
<dbReference type="EMBL" id="CP001601">
    <property type="protein sequence ID" value="ACP33068.1"/>
    <property type="molecule type" value="Genomic_DNA"/>
</dbReference>
<dbReference type="RefSeq" id="WP_010190258.1">
    <property type="nucleotide sequence ID" value="NZ_ACLH01000083.1"/>
</dbReference>
<dbReference type="SMR" id="C3PGW4"/>
<dbReference type="STRING" id="548476.cauri_1475"/>
<dbReference type="GeneID" id="31924106"/>
<dbReference type="KEGG" id="car:cauri_1475"/>
<dbReference type="eggNOG" id="COG1327">
    <property type="taxonomic scope" value="Bacteria"/>
</dbReference>
<dbReference type="HOGENOM" id="CLU_108412_1_0_11"/>
<dbReference type="OrthoDB" id="9807461at2"/>
<dbReference type="Proteomes" id="UP000002077">
    <property type="component" value="Chromosome"/>
</dbReference>
<dbReference type="GO" id="GO:0005524">
    <property type="term" value="F:ATP binding"/>
    <property type="evidence" value="ECO:0007669"/>
    <property type="project" value="UniProtKB-KW"/>
</dbReference>
<dbReference type="GO" id="GO:0003677">
    <property type="term" value="F:DNA binding"/>
    <property type="evidence" value="ECO:0007669"/>
    <property type="project" value="UniProtKB-KW"/>
</dbReference>
<dbReference type="GO" id="GO:0008270">
    <property type="term" value="F:zinc ion binding"/>
    <property type="evidence" value="ECO:0007669"/>
    <property type="project" value="UniProtKB-UniRule"/>
</dbReference>
<dbReference type="GO" id="GO:0045892">
    <property type="term" value="P:negative regulation of DNA-templated transcription"/>
    <property type="evidence" value="ECO:0007669"/>
    <property type="project" value="UniProtKB-UniRule"/>
</dbReference>
<dbReference type="HAMAP" id="MF_00440">
    <property type="entry name" value="NrdR"/>
    <property type="match status" value="1"/>
</dbReference>
<dbReference type="InterPro" id="IPR005144">
    <property type="entry name" value="ATP-cone_dom"/>
</dbReference>
<dbReference type="InterPro" id="IPR055173">
    <property type="entry name" value="NrdR-like_N"/>
</dbReference>
<dbReference type="InterPro" id="IPR003796">
    <property type="entry name" value="RNR_NrdR-like"/>
</dbReference>
<dbReference type="NCBIfam" id="TIGR00244">
    <property type="entry name" value="transcriptional regulator NrdR"/>
    <property type="match status" value="1"/>
</dbReference>
<dbReference type="PANTHER" id="PTHR30455">
    <property type="entry name" value="TRANSCRIPTIONAL REPRESSOR NRDR"/>
    <property type="match status" value="1"/>
</dbReference>
<dbReference type="PANTHER" id="PTHR30455:SF2">
    <property type="entry name" value="TRANSCRIPTIONAL REPRESSOR NRDR"/>
    <property type="match status" value="1"/>
</dbReference>
<dbReference type="Pfam" id="PF03477">
    <property type="entry name" value="ATP-cone"/>
    <property type="match status" value="1"/>
</dbReference>
<dbReference type="Pfam" id="PF22811">
    <property type="entry name" value="Zn_ribbon_NrdR"/>
    <property type="match status" value="1"/>
</dbReference>
<dbReference type="PROSITE" id="PS51161">
    <property type="entry name" value="ATP_CONE"/>
    <property type="match status" value="1"/>
</dbReference>
<organism>
    <name type="scientific">Corynebacterium aurimucosum (strain ATCC 700975 / DSM 44827 / CIP 107346 / CN-1)</name>
    <name type="common">Corynebacterium nigricans</name>
    <dbReference type="NCBI Taxonomy" id="548476"/>
    <lineage>
        <taxon>Bacteria</taxon>
        <taxon>Bacillati</taxon>
        <taxon>Actinomycetota</taxon>
        <taxon>Actinomycetes</taxon>
        <taxon>Mycobacteriales</taxon>
        <taxon>Corynebacteriaceae</taxon>
        <taxon>Corynebacterium</taxon>
    </lineage>
</organism>
<proteinExistence type="inferred from homology"/>